<proteinExistence type="inferred from homology"/>
<accession>Q8P4U6</accession>
<comment type="function">
    <text evidence="1">Subunit of malonate decarboxylase, it is an acyl carrier protein to which acetyl and malonyl thioester residues are bound via a 2'-(5''-phosphoribosyl)-3'-dephospho-CoA prosthetic group and turn over during the catalytic mechanism.</text>
</comment>
<comment type="subcellular location">
    <subcellularLocation>
        <location evidence="1">Cytoplasm</location>
    </subcellularLocation>
</comment>
<comment type="PTM">
    <text evidence="1">Covalently binds the prosthetic group of malonate decarboxylase.</text>
</comment>
<comment type="similarity">
    <text evidence="1">Belongs to the MdcC family.</text>
</comment>
<dbReference type="EMBL" id="AE008922">
    <property type="protein sequence ID" value="AAM42880.1"/>
    <property type="molecule type" value="Genomic_DNA"/>
</dbReference>
<dbReference type="RefSeq" id="NP_638956.1">
    <property type="nucleotide sequence ID" value="NC_003902.1"/>
</dbReference>
<dbReference type="RefSeq" id="WP_011038694.1">
    <property type="nucleotide sequence ID" value="NC_003902.1"/>
</dbReference>
<dbReference type="SMR" id="Q8P4U6"/>
<dbReference type="STRING" id="190485.XCC3610"/>
<dbReference type="EnsemblBacteria" id="AAM42880">
    <property type="protein sequence ID" value="AAM42880"/>
    <property type="gene ID" value="XCC3610"/>
</dbReference>
<dbReference type="KEGG" id="xcc:XCC3610"/>
<dbReference type="PATRIC" id="fig|190485.4.peg.3867"/>
<dbReference type="eggNOG" id="COG3052">
    <property type="taxonomic scope" value="Bacteria"/>
</dbReference>
<dbReference type="HOGENOM" id="CLU_173135_0_0_6"/>
<dbReference type="OrthoDB" id="120290at2"/>
<dbReference type="Proteomes" id="UP000001010">
    <property type="component" value="Chromosome"/>
</dbReference>
<dbReference type="GO" id="GO:0005737">
    <property type="term" value="C:cytoplasm"/>
    <property type="evidence" value="ECO:0007669"/>
    <property type="project" value="UniProtKB-SubCell"/>
</dbReference>
<dbReference type="GO" id="GO:0000036">
    <property type="term" value="F:acyl carrier activity"/>
    <property type="evidence" value="ECO:0007669"/>
    <property type="project" value="UniProtKB-UniRule"/>
</dbReference>
<dbReference type="HAMAP" id="MF_00710">
    <property type="entry name" value="Malonate_deCO2ase_dsu"/>
    <property type="match status" value="1"/>
</dbReference>
<dbReference type="InterPro" id="IPR023439">
    <property type="entry name" value="Mal_deCO2ase/Cit_lyase_ACP"/>
</dbReference>
<dbReference type="InterPro" id="IPR009662">
    <property type="entry name" value="Malonate_deCO2ase_dsu"/>
</dbReference>
<dbReference type="NCBIfam" id="TIGR03130">
    <property type="entry name" value="malonate_delta"/>
    <property type="match status" value="1"/>
</dbReference>
<dbReference type="Pfam" id="PF06857">
    <property type="entry name" value="ACP"/>
    <property type="match status" value="1"/>
</dbReference>
<name>MDCC_XANCP</name>
<sequence>METLRYRFDGRNGARTGLDHALVGVVASGNLEVLVERVPLGGAMEIEIVTAARGFGEIWQAVLDDFAARHSLQDVRISINDVGATPAVVSLRLEQAIDVLQGADA</sequence>
<feature type="chain" id="PRO_0000220291" description="Malonate decarboxylase acyl carrier protein">
    <location>
        <begin position="1"/>
        <end position="105"/>
    </location>
</feature>
<feature type="modified residue" description="O-(phosphoribosyl dephospho-coenzyme A)serine" evidence="1">
    <location>
        <position position="28"/>
    </location>
</feature>
<keyword id="KW-0963">Cytoplasm</keyword>
<keyword id="KW-0597">Phosphoprotein</keyword>
<keyword id="KW-1185">Reference proteome</keyword>
<evidence type="ECO:0000255" key="1">
    <source>
        <dbReference type="HAMAP-Rule" id="MF_00710"/>
    </source>
</evidence>
<protein>
    <recommendedName>
        <fullName evidence="1">Malonate decarboxylase acyl carrier protein</fullName>
    </recommendedName>
    <alternativeName>
        <fullName evidence="1">Malonate decarboxylase subunit delta</fullName>
    </alternativeName>
</protein>
<gene>
    <name evidence="1" type="primary">mdcC</name>
    <name type="ordered locus">XCC3610</name>
</gene>
<reference key="1">
    <citation type="journal article" date="2002" name="Nature">
        <title>Comparison of the genomes of two Xanthomonas pathogens with differing host specificities.</title>
        <authorList>
            <person name="da Silva A.C.R."/>
            <person name="Ferro J.A."/>
            <person name="Reinach F.C."/>
            <person name="Farah C.S."/>
            <person name="Furlan L.R."/>
            <person name="Quaggio R.B."/>
            <person name="Monteiro-Vitorello C.B."/>
            <person name="Van Sluys M.A."/>
            <person name="Almeida N.F. Jr."/>
            <person name="Alves L.M.C."/>
            <person name="do Amaral A.M."/>
            <person name="Bertolini M.C."/>
            <person name="Camargo L.E.A."/>
            <person name="Camarotte G."/>
            <person name="Cannavan F."/>
            <person name="Cardozo J."/>
            <person name="Chambergo F."/>
            <person name="Ciapina L.P."/>
            <person name="Cicarelli R.M.B."/>
            <person name="Coutinho L.L."/>
            <person name="Cursino-Santos J.R."/>
            <person name="El-Dorry H."/>
            <person name="Faria J.B."/>
            <person name="Ferreira A.J.S."/>
            <person name="Ferreira R.C.C."/>
            <person name="Ferro M.I.T."/>
            <person name="Formighieri E.F."/>
            <person name="Franco M.C."/>
            <person name="Greggio C.C."/>
            <person name="Gruber A."/>
            <person name="Katsuyama A.M."/>
            <person name="Kishi L.T."/>
            <person name="Leite R.P."/>
            <person name="Lemos E.G.M."/>
            <person name="Lemos M.V.F."/>
            <person name="Locali E.C."/>
            <person name="Machado M.A."/>
            <person name="Madeira A.M.B.N."/>
            <person name="Martinez-Rossi N.M."/>
            <person name="Martins E.C."/>
            <person name="Meidanis J."/>
            <person name="Menck C.F.M."/>
            <person name="Miyaki C.Y."/>
            <person name="Moon D.H."/>
            <person name="Moreira L.M."/>
            <person name="Novo M.T.M."/>
            <person name="Okura V.K."/>
            <person name="Oliveira M.C."/>
            <person name="Oliveira V.R."/>
            <person name="Pereira H.A."/>
            <person name="Rossi A."/>
            <person name="Sena J.A.D."/>
            <person name="Silva C."/>
            <person name="de Souza R.F."/>
            <person name="Spinola L.A.F."/>
            <person name="Takita M.A."/>
            <person name="Tamura R.E."/>
            <person name="Teixeira E.C."/>
            <person name="Tezza R.I.D."/>
            <person name="Trindade dos Santos M."/>
            <person name="Truffi D."/>
            <person name="Tsai S.M."/>
            <person name="White F.F."/>
            <person name="Setubal J.C."/>
            <person name="Kitajima J.P."/>
        </authorList>
    </citation>
    <scope>NUCLEOTIDE SEQUENCE [LARGE SCALE GENOMIC DNA]</scope>
    <source>
        <strain>ATCC 33913 / DSM 3586 / NCPPB 528 / LMG 568 / P 25</strain>
    </source>
</reference>
<organism>
    <name type="scientific">Xanthomonas campestris pv. campestris (strain ATCC 33913 / DSM 3586 / NCPPB 528 / LMG 568 / P 25)</name>
    <dbReference type="NCBI Taxonomy" id="190485"/>
    <lineage>
        <taxon>Bacteria</taxon>
        <taxon>Pseudomonadati</taxon>
        <taxon>Pseudomonadota</taxon>
        <taxon>Gammaproteobacteria</taxon>
        <taxon>Lysobacterales</taxon>
        <taxon>Lysobacteraceae</taxon>
        <taxon>Xanthomonas</taxon>
    </lineage>
</organism>